<proteinExistence type="inferred from homology"/>
<keyword id="KW-0963">Cytoplasm</keyword>
<keyword id="KW-0269">Exonuclease</keyword>
<keyword id="KW-0378">Hydrolase</keyword>
<keyword id="KW-0540">Nuclease</keyword>
<keyword id="KW-0694">RNA-binding</keyword>
<accession>B7LY47</accession>
<sequence>MFQDNPLLAQLKQQLHSQTPRAEGVVKATEKGFGFLEVDAQKSYFIPPPQMKKVMHGDRIIAVIHSEKERESAEPEELVEPFLTRFVGKVQGKNDRLAIVPDHPLLKDAIPCRAARGLNHEFKEGDWAVAEMRRHPLKGDRSFYAELTQYITFGDDHFVPWWVTLARHNLEKEAPDGVATEMLDEGLVREDLTALDFVTIDSASTEDMDDALFAKALPDDKLQLIVAIADPTAWIAEGSKLDKAAKIRAFTNYLPGFNIPMLPRELSDDLCSLRANEVRPVLACRMTLSADGTIEDNIEFFAATIESKAKLVYDQVSDWLENTGDWQPESEAIAEQVRLLAQICQRRGEWRHNHALVFKDRPDYRFILGEKGEVLDIVAEPRRIANRIVEEAMIAANICAARVLRDKLGFGIYNVHMGFDPANADALAALLKTHGLHVDAEEVLTLDGFCKLRRELDAQPTGFLDSRIRRFQSFAEISTEPGPHFGLGLEAYATWTSPIRKYGDMINHRLLKAVIKGETATRPQDEITVQMAERRRLNRMAERDVGDWLYARFLKDKAGTDTRFAAEIVDISRGGMRVRLVDNGAIAFIPAPFLHAMRDELVCSQENGTVQIKGETVYKVTDVIDVTIAEVRMETRSIIARPVA</sequence>
<evidence type="ECO:0000255" key="1"/>
<evidence type="ECO:0000255" key="2">
    <source>
        <dbReference type="HAMAP-Rule" id="MF_01036"/>
    </source>
</evidence>
<comment type="function">
    <text evidence="2">Involved in mRNA degradation. Hydrolyzes single-stranded polyribonucleotides processively in the 3' to 5' direction.</text>
</comment>
<comment type="catalytic activity">
    <reaction evidence="2">
        <text>Exonucleolytic cleavage in the 3'- to 5'-direction to yield nucleoside 5'-phosphates.</text>
        <dbReference type="EC" id="3.1.13.1"/>
    </reaction>
</comment>
<comment type="subcellular location">
    <subcellularLocation>
        <location evidence="2">Cytoplasm</location>
    </subcellularLocation>
</comment>
<comment type="similarity">
    <text evidence="2">Belongs to the RNR ribonuclease family. RNase II subfamily.</text>
</comment>
<name>RNB_ECO8A</name>
<feature type="chain" id="PRO_1000135864" description="Exoribonuclease 2">
    <location>
        <begin position="1"/>
        <end position="644"/>
    </location>
</feature>
<feature type="domain" description="RNB" evidence="1">
    <location>
        <begin position="189"/>
        <end position="516"/>
    </location>
</feature>
<feature type="domain" description="S1 motif" evidence="2">
    <location>
        <begin position="561"/>
        <end position="643"/>
    </location>
</feature>
<reference key="1">
    <citation type="journal article" date="2009" name="PLoS Genet.">
        <title>Organised genome dynamics in the Escherichia coli species results in highly diverse adaptive paths.</title>
        <authorList>
            <person name="Touchon M."/>
            <person name="Hoede C."/>
            <person name="Tenaillon O."/>
            <person name="Barbe V."/>
            <person name="Baeriswyl S."/>
            <person name="Bidet P."/>
            <person name="Bingen E."/>
            <person name="Bonacorsi S."/>
            <person name="Bouchier C."/>
            <person name="Bouvet O."/>
            <person name="Calteau A."/>
            <person name="Chiapello H."/>
            <person name="Clermont O."/>
            <person name="Cruveiller S."/>
            <person name="Danchin A."/>
            <person name="Diard M."/>
            <person name="Dossat C."/>
            <person name="Karoui M.E."/>
            <person name="Frapy E."/>
            <person name="Garry L."/>
            <person name="Ghigo J.M."/>
            <person name="Gilles A.M."/>
            <person name="Johnson J."/>
            <person name="Le Bouguenec C."/>
            <person name="Lescat M."/>
            <person name="Mangenot S."/>
            <person name="Martinez-Jehanne V."/>
            <person name="Matic I."/>
            <person name="Nassif X."/>
            <person name="Oztas S."/>
            <person name="Petit M.A."/>
            <person name="Pichon C."/>
            <person name="Rouy Z."/>
            <person name="Ruf C.S."/>
            <person name="Schneider D."/>
            <person name="Tourret J."/>
            <person name="Vacherie B."/>
            <person name="Vallenet D."/>
            <person name="Medigue C."/>
            <person name="Rocha E.P.C."/>
            <person name="Denamur E."/>
        </authorList>
    </citation>
    <scope>NUCLEOTIDE SEQUENCE [LARGE SCALE GENOMIC DNA]</scope>
    <source>
        <strain>IAI1</strain>
    </source>
</reference>
<dbReference type="EC" id="3.1.13.1" evidence="2"/>
<dbReference type="EMBL" id="CU928160">
    <property type="protein sequence ID" value="CAQ98170.1"/>
    <property type="molecule type" value="Genomic_DNA"/>
</dbReference>
<dbReference type="RefSeq" id="WP_000484982.1">
    <property type="nucleotide sequence ID" value="NC_011741.1"/>
</dbReference>
<dbReference type="SMR" id="B7LY47"/>
<dbReference type="KEGG" id="ecr:ECIAI1_1311"/>
<dbReference type="HOGENOM" id="CLU_002333_7_3_6"/>
<dbReference type="GO" id="GO:0005829">
    <property type="term" value="C:cytosol"/>
    <property type="evidence" value="ECO:0007669"/>
    <property type="project" value="UniProtKB-ARBA"/>
</dbReference>
<dbReference type="GO" id="GO:0008859">
    <property type="term" value="F:exoribonuclease II activity"/>
    <property type="evidence" value="ECO:0007669"/>
    <property type="project" value="UniProtKB-UniRule"/>
</dbReference>
<dbReference type="GO" id="GO:0003723">
    <property type="term" value="F:RNA binding"/>
    <property type="evidence" value="ECO:0007669"/>
    <property type="project" value="UniProtKB-KW"/>
</dbReference>
<dbReference type="GO" id="GO:0006402">
    <property type="term" value="P:mRNA catabolic process"/>
    <property type="evidence" value="ECO:0007669"/>
    <property type="project" value="UniProtKB-UniRule"/>
</dbReference>
<dbReference type="FunFam" id="2.40.50.140:FF:000079">
    <property type="entry name" value="Exoribonuclease 2"/>
    <property type="match status" value="1"/>
</dbReference>
<dbReference type="FunFam" id="2.40.50.140:FF:000081">
    <property type="entry name" value="Exoribonuclease 2"/>
    <property type="match status" value="1"/>
</dbReference>
<dbReference type="FunFam" id="2.40.50.640:FF:000001">
    <property type="entry name" value="Exoribonuclease 2"/>
    <property type="match status" value="1"/>
</dbReference>
<dbReference type="Gene3D" id="2.40.50.640">
    <property type="match status" value="1"/>
</dbReference>
<dbReference type="Gene3D" id="2.40.50.140">
    <property type="entry name" value="Nucleic acid-binding proteins"/>
    <property type="match status" value="2"/>
</dbReference>
<dbReference type="HAMAP" id="MF_01036">
    <property type="entry name" value="RNase_II"/>
    <property type="match status" value="1"/>
</dbReference>
<dbReference type="InterPro" id="IPR011129">
    <property type="entry name" value="CSD"/>
</dbReference>
<dbReference type="InterPro" id="IPR012340">
    <property type="entry name" value="NA-bd_OB-fold"/>
</dbReference>
<dbReference type="InterPro" id="IPR013223">
    <property type="entry name" value="RNase_B_OB_dom"/>
</dbReference>
<dbReference type="InterPro" id="IPR011804">
    <property type="entry name" value="RNase_II"/>
</dbReference>
<dbReference type="InterPro" id="IPR001900">
    <property type="entry name" value="RNase_II/R"/>
</dbReference>
<dbReference type="InterPro" id="IPR022966">
    <property type="entry name" value="RNase_II/R_CS"/>
</dbReference>
<dbReference type="InterPro" id="IPR004476">
    <property type="entry name" value="RNase_II/RNase_R"/>
</dbReference>
<dbReference type="InterPro" id="IPR050180">
    <property type="entry name" value="RNR_Ribonuclease"/>
</dbReference>
<dbReference type="InterPro" id="IPR003029">
    <property type="entry name" value="S1_domain"/>
</dbReference>
<dbReference type="NCBIfam" id="TIGR00358">
    <property type="entry name" value="3_prime_RNase"/>
    <property type="match status" value="1"/>
</dbReference>
<dbReference type="NCBIfam" id="NF003455">
    <property type="entry name" value="PRK05054.1"/>
    <property type="match status" value="1"/>
</dbReference>
<dbReference type="NCBIfam" id="TIGR02062">
    <property type="entry name" value="RNase_B"/>
    <property type="match status" value="1"/>
</dbReference>
<dbReference type="PANTHER" id="PTHR23355:SF37">
    <property type="entry name" value="EXORIBONUCLEASE 2"/>
    <property type="match status" value="1"/>
</dbReference>
<dbReference type="PANTHER" id="PTHR23355">
    <property type="entry name" value="RIBONUCLEASE"/>
    <property type="match status" value="1"/>
</dbReference>
<dbReference type="Pfam" id="PF08206">
    <property type="entry name" value="OB_RNB"/>
    <property type="match status" value="1"/>
</dbReference>
<dbReference type="Pfam" id="PF00773">
    <property type="entry name" value="RNB"/>
    <property type="match status" value="1"/>
</dbReference>
<dbReference type="Pfam" id="PF00575">
    <property type="entry name" value="S1"/>
    <property type="match status" value="1"/>
</dbReference>
<dbReference type="SMART" id="SM00357">
    <property type="entry name" value="CSP"/>
    <property type="match status" value="1"/>
</dbReference>
<dbReference type="SMART" id="SM00955">
    <property type="entry name" value="RNB"/>
    <property type="match status" value="1"/>
</dbReference>
<dbReference type="SUPFAM" id="SSF50249">
    <property type="entry name" value="Nucleic acid-binding proteins"/>
    <property type="match status" value="4"/>
</dbReference>
<dbReference type="PROSITE" id="PS01175">
    <property type="entry name" value="RIBONUCLEASE_II"/>
    <property type="match status" value="1"/>
</dbReference>
<protein>
    <recommendedName>
        <fullName evidence="2">Exoribonuclease 2</fullName>
        <ecNumber evidence="2">3.1.13.1</ecNumber>
    </recommendedName>
    <alternativeName>
        <fullName evidence="2">Exoribonuclease II</fullName>
        <shortName evidence="2">RNase II</shortName>
        <shortName evidence="2">Ribonuclease II</shortName>
    </alternativeName>
</protein>
<organism>
    <name type="scientific">Escherichia coli O8 (strain IAI1)</name>
    <dbReference type="NCBI Taxonomy" id="585034"/>
    <lineage>
        <taxon>Bacteria</taxon>
        <taxon>Pseudomonadati</taxon>
        <taxon>Pseudomonadota</taxon>
        <taxon>Gammaproteobacteria</taxon>
        <taxon>Enterobacterales</taxon>
        <taxon>Enterobacteriaceae</taxon>
        <taxon>Escherichia</taxon>
    </lineage>
</organism>
<gene>
    <name evidence="2" type="primary">rnb</name>
    <name type="ordered locus">ECIAI1_1311</name>
</gene>